<proteinExistence type="inferred from homology"/>
<sequence length="337" mass="36007">MRVLGIETSCDETGIAIYDDEKGLLANQLYSQVKLHADYGGVVPELASRDHVRKTVPLIQAALKESGLTAKDIDAVAYTAGPGLVGALLVGATVGRSLAFAWNVPAIPVHHMEGHLLAPMLEDNPPEFPFVALLVSGGHTQLISVTGIGQYELLGESIDDAAGEAFDKTAKLLGLDYPGGPLLSKMAAQGTAGRFVFPRPMTDRPGLDFSFSGLKTFAANTIRDNGTDDQTRADIARAFEDAVVDTLMIKCKRALDQTGFKRLVMAGGVSANRTLRAKLAEMMKKRRGEVFYARPEFCTDNGAMIAYAGMVRFKAGATADLGVSVRPRWPLAELPAA</sequence>
<gene>
    <name evidence="1" type="primary">tsaD</name>
    <name type="synonym">gcp</name>
    <name type="ordered locus">SFV_3104</name>
</gene>
<comment type="function">
    <text evidence="1">Required for the formation of a threonylcarbamoyl group on adenosine at position 37 (t(6)A37) in tRNAs that read codons beginning with adenine. Is involved in the transfer of the threonylcarbamoyl moiety of threonylcarbamoyl-AMP (TC-AMP) to the N6 group of A37, together with TsaE and TsaB. TsaD likely plays a direct catalytic role in this reaction.</text>
</comment>
<comment type="catalytic activity">
    <reaction evidence="1">
        <text>L-threonylcarbamoyladenylate + adenosine(37) in tRNA = N(6)-L-threonylcarbamoyladenosine(37) in tRNA + AMP + H(+)</text>
        <dbReference type="Rhea" id="RHEA:37059"/>
        <dbReference type="Rhea" id="RHEA-COMP:10162"/>
        <dbReference type="Rhea" id="RHEA-COMP:10163"/>
        <dbReference type="ChEBI" id="CHEBI:15378"/>
        <dbReference type="ChEBI" id="CHEBI:73682"/>
        <dbReference type="ChEBI" id="CHEBI:74411"/>
        <dbReference type="ChEBI" id="CHEBI:74418"/>
        <dbReference type="ChEBI" id="CHEBI:456215"/>
        <dbReference type="EC" id="2.3.1.234"/>
    </reaction>
</comment>
<comment type="cofactor">
    <cofactor evidence="1">
        <name>Fe(2+)</name>
        <dbReference type="ChEBI" id="CHEBI:29033"/>
    </cofactor>
    <text evidence="1">Binds 1 Fe(2+) ion per subunit.</text>
</comment>
<comment type="subcellular location">
    <subcellularLocation>
        <location evidence="1">Cytoplasm</location>
    </subcellularLocation>
</comment>
<comment type="similarity">
    <text evidence="1">Belongs to the KAE1 / TsaD family.</text>
</comment>
<feature type="chain" id="PRO_1000024455" description="tRNA N6-adenosine threonylcarbamoyltransferase">
    <location>
        <begin position="1"/>
        <end position="337"/>
    </location>
</feature>
<feature type="binding site" evidence="1">
    <location>
        <position position="111"/>
    </location>
    <ligand>
        <name>Fe cation</name>
        <dbReference type="ChEBI" id="CHEBI:24875"/>
    </ligand>
</feature>
<feature type="binding site" evidence="1">
    <location>
        <position position="115"/>
    </location>
    <ligand>
        <name>Fe cation</name>
        <dbReference type="ChEBI" id="CHEBI:24875"/>
    </ligand>
</feature>
<feature type="binding site" evidence="1">
    <location>
        <begin position="134"/>
        <end position="138"/>
    </location>
    <ligand>
        <name>substrate</name>
    </ligand>
</feature>
<feature type="binding site" evidence="1">
    <location>
        <position position="167"/>
    </location>
    <ligand>
        <name>substrate</name>
    </ligand>
</feature>
<feature type="binding site" evidence="1">
    <location>
        <position position="180"/>
    </location>
    <ligand>
        <name>substrate</name>
    </ligand>
</feature>
<feature type="binding site" evidence="1">
    <location>
        <position position="272"/>
    </location>
    <ligand>
        <name>substrate</name>
    </ligand>
</feature>
<feature type="binding site" evidence="1">
    <location>
        <position position="300"/>
    </location>
    <ligand>
        <name>Fe cation</name>
        <dbReference type="ChEBI" id="CHEBI:24875"/>
    </ligand>
</feature>
<evidence type="ECO:0000255" key="1">
    <source>
        <dbReference type="HAMAP-Rule" id="MF_01445"/>
    </source>
</evidence>
<keyword id="KW-0012">Acyltransferase</keyword>
<keyword id="KW-0963">Cytoplasm</keyword>
<keyword id="KW-0408">Iron</keyword>
<keyword id="KW-0479">Metal-binding</keyword>
<keyword id="KW-0808">Transferase</keyword>
<keyword id="KW-0819">tRNA processing</keyword>
<reference key="1">
    <citation type="journal article" date="2006" name="BMC Genomics">
        <title>Complete genome sequence of Shigella flexneri 5b and comparison with Shigella flexneri 2a.</title>
        <authorList>
            <person name="Nie H."/>
            <person name="Yang F."/>
            <person name="Zhang X."/>
            <person name="Yang J."/>
            <person name="Chen L."/>
            <person name="Wang J."/>
            <person name="Xiong Z."/>
            <person name="Peng J."/>
            <person name="Sun L."/>
            <person name="Dong J."/>
            <person name="Xue Y."/>
            <person name="Xu X."/>
            <person name="Chen S."/>
            <person name="Yao Z."/>
            <person name="Shen Y."/>
            <person name="Jin Q."/>
        </authorList>
    </citation>
    <scope>NUCLEOTIDE SEQUENCE [LARGE SCALE GENOMIC DNA]</scope>
    <source>
        <strain>8401</strain>
    </source>
</reference>
<name>TSAD_SHIF8</name>
<accession>Q0T0J9</accession>
<dbReference type="EC" id="2.3.1.234" evidence="1"/>
<dbReference type="EMBL" id="CP000266">
    <property type="protein sequence ID" value="ABF05166.1"/>
    <property type="molecule type" value="Genomic_DNA"/>
</dbReference>
<dbReference type="RefSeq" id="WP_001264365.1">
    <property type="nucleotide sequence ID" value="NC_008258.1"/>
</dbReference>
<dbReference type="SMR" id="Q0T0J9"/>
<dbReference type="GeneID" id="93778929"/>
<dbReference type="KEGG" id="sfv:SFV_3104"/>
<dbReference type="HOGENOM" id="CLU_023208_0_2_6"/>
<dbReference type="Proteomes" id="UP000000659">
    <property type="component" value="Chromosome"/>
</dbReference>
<dbReference type="GO" id="GO:0005737">
    <property type="term" value="C:cytoplasm"/>
    <property type="evidence" value="ECO:0007669"/>
    <property type="project" value="UniProtKB-SubCell"/>
</dbReference>
<dbReference type="GO" id="GO:0005506">
    <property type="term" value="F:iron ion binding"/>
    <property type="evidence" value="ECO:0007669"/>
    <property type="project" value="UniProtKB-UniRule"/>
</dbReference>
<dbReference type="GO" id="GO:0061711">
    <property type="term" value="F:N(6)-L-threonylcarbamoyladenine synthase activity"/>
    <property type="evidence" value="ECO:0007669"/>
    <property type="project" value="UniProtKB-EC"/>
</dbReference>
<dbReference type="GO" id="GO:0002949">
    <property type="term" value="P:tRNA threonylcarbamoyladenosine modification"/>
    <property type="evidence" value="ECO:0007669"/>
    <property type="project" value="UniProtKB-UniRule"/>
</dbReference>
<dbReference type="CDD" id="cd24097">
    <property type="entry name" value="ASKHA_NBD_TsaD-like"/>
    <property type="match status" value="1"/>
</dbReference>
<dbReference type="FunFam" id="3.30.420.40:FF:000031">
    <property type="entry name" value="tRNA N6-adenosine threonylcarbamoyltransferase"/>
    <property type="match status" value="1"/>
</dbReference>
<dbReference type="Gene3D" id="3.30.420.40">
    <property type="match status" value="2"/>
</dbReference>
<dbReference type="HAMAP" id="MF_01445">
    <property type="entry name" value="TsaD"/>
    <property type="match status" value="1"/>
</dbReference>
<dbReference type="InterPro" id="IPR043129">
    <property type="entry name" value="ATPase_NBD"/>
</dbReference>
<dbReference type="InterPro" id="IPR000905">
    <property type="entry name" value="Gcp-like_dom"/>
</dbReference>
<dbReference type="InterPro" id="IPR017861">
    <property type="entry name" value="KAE1/TsaD"/>
</dbReference>
<dbReference type="InterPro" id="IPR017860">
    <property type="entry name" value="Peptidase_M22_CS"/>
</dbReference>
<dbReference type="InterPro" id="IPR022450">
    <property type="entry name" value="TsaD"/>
</dbReference>
<dbReference type="NCBIfam" id="TIGR00329">
    <property type="entry name" value="gcp_kae1"/>
    <property type="match status" value="1"/>
</dbReference>
<dbReference type="NCBIfam" id="TIGR03723">
    <property type="entry name" value="T6A_TsaD_YgjD"/>
    <property type="match status" value="1"/>
</dbReference>
<dbReference type="PANTHER" id="PTHR11735">
    <property type="entry name" value="TRNA N6-ADENOSINE THREONYLCARBAMOYLTRANSFERASE"/>
    <property type="match status" value="1"/>
</dbReference>
<dbReference type="PANTHER" id="PTHR11735:SF6">
    <property type="entry name" value="TRNA N6-ADENOSINE THREONYLCARBAMOYLTRANSFERASE, MITOCHONDRIAL"/>
    <property type="match status" value="1"/>
</dbReference>
<dbReference type="Pfam" id="PF00814">
    <property type="entry name" value="TsaD"/>
    <property type="match status" value="1"/>
</dbReference>
<dbReference type="PRINTS" id="PR00789">
    <property type="entry name" value="OSIALOPTASE"/>
</dbReference>
<dbReference type="SUPFAM" id="SSF53067">
    <property type="entry name" value="Actin-like ATPase domain"/>
    <property type="match status" value="1"/>
</dbReference>
<dbReference type="PROSITE" id="PS01016">
    <property type="entry name" value="GLYCOPROTEASE"/>
    <property type="match status" value="1"/>
</dbReference>
<organism>
    <name type="scientific">Shigella flexneri serotype 5b (strain 8401)</name>
    <dbReference type="NCBI Taxonomy" id="373384"/>
    <lineage>
        <taxon>Bacteria</taxon>
        <taxon>Pseudomonadati</taxon>
        <taxon>Pseudomonadota</taxon>
        <taxon>Gammaproteobacteria</taxon>
        <taxon>Enterobacterales</taxon>
        <taxon>Enterobacteriaceae</taxon>
        <taxon>Shigella</taxon>
    </lineage>
</organism>
<protein>
    <recommendedName>
        <fullName evidence="1">tRNA N6-adenosine threonylcarbamoyltransferase</fullName>
        <ecNumber evidence="1">2.3.1.234</ecNumber>
    </recommendedName>
    <alternativeName>
        <fullName evidence="1">N6-L-threonylcarbamoyladenine synthase</fullName>
        <shortName evidence="1">t(6)A synthase</shortName>
    </alternativeName>
    <alternativeName>
        <fullName evidence="1">t(6)A37 threonylcarbamoyladenosine biosynthesis protein TsaD</fullName>
    </alternativeName>
    <alternativeName>
        <fullName evidence="1">tRNA threonylcarbamoyladenosine biosynthesis protein TsaD</fullName>
    </alternativeName>
</protein>